<proteinExistence type="evidence at protein level"/>
<comment type="function">
    <text evidence="3">Interacts with vasopressin V2 receptor (V2R/AVPR2), probably in a selective manner. Inhibits vasopressin binding human V2R in the nanomolar range (Ki=8.16 nM), and also moderately inhibits vasopressin-induced cAMP production (IC(50)=224 nM). In vivo, intraperitoneal injection of this protein into rats increases diuresis by 5.5-fold, without any loss of electrolytes.</text>
</comment>
<comment type="subcellular location">
    <subcellularLocation>
        <location evidence="3">Secreted</location>
    </subcellularLocation>
</comment>
<comment type="tissue specificity">
    <text evidence="6">Expressed by the venom gland.</text>
</comment>
<comment type="domain">
    <text evidence="1">Exploits its two major loops and engages more positions in its interaction with V2R. The pharmacophore defined by numerous amino acids positioned in loop 1 (9 to 18) and loop 2 (34, 39 and 44) may be at the origin of the absolute selectivity of this protein for V2R.</text>
</comment>
<comment type="mass spectrometry" mass="6395.85" method="MALDI" evidence="3">
    <text>Monoisotopic mass.</text>
</comment>
<comment type="similarity">
    <text evidence="5">Belongs to the venom Kunitz-type family.</text>
</comment>
<evidence type="ECO:0000250" key="1">
    <source>
        <dbReference type="UniProtKB" id="A0A1Z0YU59"/>
    </source>
</evidence>
<evidence type="ECO:0000255" key="2">
    <source>
        <dbReference type="PROSITE-ProRule" id="PRU00031"/>
    </source>
</evidence>
<evidence type="ECO:0000269" key="3">
    <source>
    </source>
</evidence>
<evidence type="ECO:0000303" key="4">
    <source>
    </source>
</evidence>
<evidence type="ECO:0000305" key="5"/>
<evidence type="ECO:0000305" key="6">
    <source>
    </source>
</evidence>
<organism>
    <name type="scientific">Dendroaspis viridis</name>
    <name type="common">Western green mamba</name>
    <dbReference type="NCBI Taxonomy" id="8621"/>
    <lineage>
        <taxon>Eukaryota</taxon>
        <taxon>Metazoa</taxon>
        <taxon>Chordata</taxon>
        <taxon>Craniata</taxon>
        <taxon>Vertebrata</taxon>
        <taxon>Euteleostomi</taxon>
        <taxon>Lepidosauria</taxon>
        <taxon>Squamata</taxon>
        <taxon>Bifurcata</taxon>
        <taxon>Unidentata</taxon>
        <taxon>Episquamata</taxon>
        <taxon>Toxicofera</taxon>
        <taxon>Serpentes</taxon>
        <taxon>Colubroidea</taxon>
        <taxon>Elapidae</taxon>
        <taxon>Elapinae</taxon>
        <taxon>Dendroaspis</taxon>
    </lineage>
</organism>
<keyword id="KW-0903">Direct protein sequencing</keyword>
<keyword id="KW-1015">Disulfide bond</keyword>
<keyword id="KW-1213">G-protein coupled receptor impairing toxin</keyword>
<keyword id="KW-0964">Secreted</keyword>
<keyword id="KW-0800">Toxin</keyword>
<protein>
    <recommendedName>
        <fullName evidence="4">Mambaquaretin-2</fullName>
        <shortName evidence="4">MQ2</shortName>
    </recommendedName>
    <alternativeName>
        <fullName evidence="4">Upsilon-Dv2a</fullName>
    </alternativeName>
</protein>
<reference key="1">
    <citation type="journal article" date="2022" name="Br. J. Pharmacol.">
        <title>A new Kunitz-type snake toxin family associated with an original mode of interaction with the vasopressin 2 receptor.</title>
        <authorList>
            <person name="Droctove L."/>
            <person name="Ciolek J."/>
            <person name="Mendre C."/>
            <person name="Chorfa A."/>
            <person name="Huerta P."/>
            <person name="Carvalho C."/>
            <person name="Gouin C."/>
            <person name="Lancien M."/>
            <person name="Stanajic-Petrovic G."/>
            <person name="Braco L."/>
            <person name="Blanchet G."/>
            <person name="Upert G."/>
            <person name="De Pauw G."/>
            <person name="Barbe P."/>
            <person name="Keck M."/>
            <person name="Mourier G."/>
            <person name="Mouillac B."/>
            <person name="Denis S."/>
            <person name="Rodriguez de la Vega R.C."/>
            <person name="Quinton L."/>
            <person name="Gilles N."/>
        </authorList>
    </citation>
    <scope>PROTEIN SEQUENCE</scope>
    <scope>FUNCTION</scope>
    <scope>BIOASSAY</scope>
    <scope>SUBCELLULAR LOCATION</scope>
    <scope>SYNTHESIS</scope>
    <scope>MASS SPECTROMETRY</scope>
    <source>
        <tissue>Venom</tissue>
    </source>
</reference>
<sequence length="57" mass="6406">RPSFCNLPVKPGPCNGFFSAFYYSQKTNKCHSFTYGGCRGNANRFSTIEECRRTCVG</sequence>
<feature type="chain" id="PRO_0000457567" description="Mambaquaretin-2" evidence="3">
    <location>
        <begin position="1"/>
        <end position="57"/>
    </location>
</feature>
<feature type="domain" description="BPTI/Kunitz inhibitor" evidence="2">
    <location>
        <begin position="5"/>
        <end position="55"/>
    </location>
</feature>
<feature type="disulfide bond" evidence="1">
    <location>
        <begin position="5"/>
        <end position="55"/>
    </location>
</feature>
<feature type="disulfide bond" evidence="1">
    <location>
        <begin position="14"/>
        <end position="38"/>
    </location>
</feature>
<feature type="disulfide bond" evidence="1">
    <location>
        <begin position="30"/>
        <end position="51"/>
    </location>
</feature>
<dbReference type="SMR" id="C0HLA5"/>
<dbReference type="GO" id="GO:0005615">
    <property type="term" value="C:extracellular space"/>
    <property type="evidence" value="ECO:0007669"/>
    <property type="project" value="TreeGrafter"/>
</dbReference>
<dbReference type="GO" id="GO:0004867">
    <property type="term" value="F:serine-type endopeptidase inhibitor activity"/>
    <property type="evidence" value="ECO:0007669"/>
    <property type="project" value="InterPro"/>
</dbReference>
<dbReference type="GO" id="GO:0090729">
    <property type="term" value="F:toxin activity"/>
    <property type="evidence" value="ECO:0007669"/>
    <property type="project" value="UniProtKB-KW"/>
</dbReference>
<dbReference type="CDD" id="cd22595">
    <property type="entry name" value="Kunitz_dendrotoxin"/>
    <property type="match status" value="1"/>
</dbReference>
<dbReference type="FunFam" id="4.10.410.10:FF:000004">
    <property type="entry name" value="Tissue factor pathway inhibitor"/>
    <property type="match status" value="1"/>
</dbReference>
<dbReference type="Gene3D" id="4.10.410.10">
    <property type="entry name" value="Pancreatic trypsin inhibitor Kunitz domain"/>
    <property type="match status" value="1"/>
</dbReference>
<dbReference type="InterPro" id="IPR002223">
    <property type="entry name" value="Kunitz_BPTI"/>
</dbReference>
<dbReference type="InterPro" id="IPR036880">
    <property type="entry name" value="Kunitz_BPTI_sf"/>
</dbReference>
<dbReference type="InterPro" id="IPR020901">
    <property type="entry name" value="Prtase_inh_Kunz-CS"/>
</dbReference>
<dbReference type="InterPro" id="IPR050098">
    <property type="entry name" value="TFPI/VKTCI-like"/>
</dbReference>
<dbReference type="PANTHER" id="PTHR10083:SF217">
    <property type="entry name" value="BOOPHILIN-H2"/>
    <property type="match status" value="1"/>
</dbReference>
<dbReference type="PANTHER" id="PTHR10083">
    <property type="entry name" value="KUNITZ-TYPE PROTEASE INHIBITOR-RELATED"/>
    <property type="match status" value="1"/>
</dbReference>
<dbReference type="Pfam" id="PF00014">
    <property type="entry name" value="Kunitz_BPTI"/>
    <property type="match status" value="1"/>
</dbReference>
<dbReference type="PRINTS" id="PR00759">
    <property type="entry name" value="BASICPTASE"/>
</dbReference>
<dbReference type="SMART" id="SM00131">
    <property type="entry name" value="KU"/>
    <property type="match status" value="1"/>
</dbReference>
<dbReference type="SUPFAM" id="SSF57362">
    <property type="entry name" value="BPTI-like"/>
    <property type="match status" value="1"/>
</dbReference>
<dbReference type="PROSITE" id="PS00280">
    <property type="entry name" value="BPTI_KUNITZ_1"/>
    <property type="match status" value="1"/>
</dbReference>
<dbReference type="PROSITE" id="PS50279">
    <property type="entry name" value="BPTI_KUNITZ_2"/>
    <property type="match status" value="1"/>
</dbReference>
<name>MAMB2_DENVI</name>
<accession>C0HLA5</accession>